<proteinExistence type="evidence at protein level"/>
<reference key="1">
    <citation type="journal article" date="2004" name="Nat. Genet.">
        <title>Complete sequencing and characterization of 21,243 full-length human cDNAs.</title>
        <authorList>
            <person name="Ota T."/>
            <person name="Suzuki Y."/>
            <person name="Nishikawa T."/>
            <person name="Otsuki T."/>
            <person name="Sugiyama T."/>
            <person name="Irie R."/>
            <person name="Wakamatsu A."/>
            <person name="Hayashi K."/>
            <person name="Sato H."/>
            <person name="Nagai K."/>
            <person name="Kimura K."/>
            <person name="Makita H."/>
            <person name="Sekine M."/>
            <person name="Obayashi M."/>
            <person name="Nishi T."/>
            <person name="Shibahara T."/>
            <person name="Tanaka T."/>
            <person name="Ishii S."/>
            <person name="Yamamoto J."/>
            <person name="Saito K."/>
            <person name="Kawai Y."/>
            <person name="Isono Y."/>
            <person name="Nakamura Y."/>
            <person name="Nagahari K."/>
            <person name="Murakami K."/>
            <person name="Yasuda T."/>
            <person name="Iwayanagi T."/>
            <person name="Wagatsuma M."/>
            <person name="Shiratori A."/>
            <person name="Sudo H."/>
            <person name="Hosoiri T."/>
            <person name="Kaku Y."/>
            <person name="Kodaira H."/>
            <person name="Kondo H."/>
            <person name="Sugawara M."/>
            <person name="Takahashi M."/>
            <person name="Kanda K."/>
            <person name="Yokoi T."/>
            <person name="Furuya T."/>
            <person name="Kikkawa E."/>
            <person name="Omura Y."/>
            <person name="Abe K."/>
            <person name="Kamihara K."/>
            <person name="Katsuta N."/>
            <person name="Sato K."/>
            <person name="Tanikawa M."/>
            <person name="Yamazaki M."/>
            <person name="Ninomiya K."/>
            <person name="Ishibashi T."/>
            <person name="Yamashita H."/>
            <person name="Murakawa K."/>
            <person name="Fujimori K."/>
            <person name="Tanai H."/>
            <person name="Kimata M."/>
            <person name="Watanabe M."/>
            <person name="Hiraoka S."/>
            <person name="Chiba Y."/>
            <person name="Ishida S."/>
            <person name="Ono Y."/>
            <person name="Takiguchi S."/>
            <person name="Watanabe S."/>
            <person name="Yosida M."/>
            <person name="Hotuta T."/>
            <person name="Kusano J."/>
            <person name="Kanehori K."/>
            <person name="Takahashi-Fujii A."/>
            <person name="Hara H."/>
            <person name="Tanase T.-O."/>
            <person name="Nomura Y."/>
            <person name="Togiya S."/>
            <person name="Komai F."/>
            <person name="Hara R."/>
            <person name="Takeuchi K."/>
            <person name="Arita M."/>
            <person name="Imose N."/>
            <person name="Musashino K."/>
            <person name="Yuuki H."/>
            <person name="Oshima A."/>
            <person name="Sasaki N."/>
            <person name="Aotsuka S."/>
            <person name="Yoshikawa Y."/>
            <person name="Matsunawa H."/>
            <person name="Ichihara T."/>
            <person name="Shiohata N."/>
            <person name="Sano S."/>
            <person name="Moriya S."/>
            <person name="Momiyama H."/>
            <person name="Satoh N."/>
            <person name="Takami S."/>
            <person name="Terashima Y."/>
            <person name="Suzuki O."/>
            <person name="Nakagawa S."/>
            <person name="Senoh A."/>
            <person name="Mizoguchi H."/>
            <person name="Goto Y."/>
            <person name="Shimizu F."/>
            <person name="Wakebe H."/>
            <person name="Hishigaki H."/>
            <person name="Watanabe T."/>
            <person name="Sugiyama A."/>
            <person name="Takemoto M."/>
            <person name="Kawakami B."/>
            <person name="Yamazaki M."/>
            <person name="Watanabe K."/>
            <person name="Kumagai A."/>
            <person name="Itakura S."/>
            <person name="Fukuzumi Y."/>
            <person name="Fujimori Y."/>
            <person name="Komiyama M."/>
            <person name="Tashiro H."/>
            <person name="Tanigami A."/>
            <person name="Fujiwara T."/>
            <person name="Ono T."/>
            <person name="Yamada K."/>
            <person name="Fujii Y."/>
            <person name="Ozaki K."/>
            <person name="Hirao M."/>
            <person name="Ohmori Y."/>
            <person name="Kawabata A."/>
            <person name="Hikiji T."/>
            <person name="Kobatake N."/>
            <person name="Inagaki H."/>
            <person name="Ikema Y."/>
            <person name="Okamoto S."/>
            <person name="Okitani R."/>
            <person name="Kawakami T."/>
            <person name="Noguchi S."/>
            <person name="Itoh T."/>
            <person name="Shigeta K."/>
            <person name="Senba T."/>
            <person name="Matsumura K."/>
            <person name="Nakajima Y."/>
            <person name="Mizuno T."/>
            <person name="Morinaga M."/>
            <person name="Sasaki M."/>
            <person name="Togashi T."/>
            <person name="Oyama M."/>
            <person name="Hata H."/>
            <person name="Watanabe M."/>
            <person name="Komatsu T."/>
            <person name="Mizushima-Sugano J."/>
            <person name="Satoh T."/>
            <person name="Shirai Y."/>
            <person name="Takahashi Y."/>
            <person name="Nakagawa K."/>
            <person name="Okumura K."/>
            <person name="Nagase T."/>
            <person name="Nomura N."/>
            <person name="Kikuchi H."/>
            <person name="Masuho Y."/>
            <person name="Yamashita R."/>
            <person name="Nakai K."/>
            <person name="Yada T."/>
            <person name="Nakamura Y."/>
            <person name="Ohara O."/>
            <person name="Isogai T."/>
            <person name="Sugano S."/>
        </authorList>
    </citation>
    <scope>NUCLEOTIDE SEQUENCE [LARGE SCALE MRNA] (ISOFORM 1)</scope>
    <source>
        <tissue>Testis</tissue>
    </source>
</reference>
<reference key="2">
    <citation type="journal article" date="2003" name="Nature">
        <title>The DNA sequence and analysis of human chromosome 6.</title>
        <authorList>
            <person name="Mungall A.J."/>
            <person name="Palmer S.A."/>
            <person name="Sims S.K."/>
            <person name="Edwards C.A."/>
            <person name="Ashurst J.L."/>
            <person name="Wilming L."/>
            <person name="Jones M.C."/>
            <person name="Horton R."/>
            <person name="Hunt S.E."/>
            <person name="Scott C.E."/>
            <person name="Gilbert J.G.R."/>
            <person name="Clamp M.E."/>
            <person name="Bethel G."/>
            <person name="Milne S."/>
            <person name="Ainscough R."/>
            <person name="Almeida J.P."/>
            <person name="Ambrose K.D."/>
            <person name="Andrews T.D."/>
            <person name="Ashwell R.I.S."/>
            <person name="Babbage A.K."/>
            <person name="Bagguley C.L."/>
            <person name="Bailey J."/>
            <person name="Banerjee R."/>
            <person name="Barker D.J."/>
            <person name="Barlow K.F."/>
            <person name="Bates K."/>
            <person name="Beare D.M."/>
            <person name="Beasley H."/>
            <person name="Beasley O."/>
            <person name="Bird C.P."/>
            <person name="Blakey S.E."/>
            <person name="Bray-Allen S."/>
            <person name="Brook J."/>
            <person name="Brown A.J."/>
            <person name="Brown J.Y."/>
            <person name="Burford D.C."/>
            <person name="Burrill W."/>
            <person name="Burton J."/>
            <person name="Carder C."/>
            <person name="Carter N.P."/>
            <person name="Chapman J.C."/>
            <person name="Clark S.Y."/>
            <person name="Clark G."/>
            <person name="Clee C.M."/>
            <person name="Clegg S."/>
            <person name="Cobley V."/>
            <person name="Collier R.E."/>
            <person name="Collins J.E."/>
            <person name="Colman L.K."/>
            <person name="Corby N.R."/>
            <person name="Coville G.J."/>
            <person name="Culley K.M."/>
            <person name="Dhami P."/>
            <person name="Davies J."/>
            <person name="Dunn M."/>
            <person name="Earthrowl M.E."/>
            <person name="Ellington A.E."/>
            <person name="Evans K.A."/>
            <person name="Faulkner L."/>
            <person name="Francis M.D."/>
            <person name="Frankish A."/>
            <person name="Frankland J."/>
            <person name="French L."/>
            <person name="Garner P."/>
            <person name="Garnett J."/>
            <person name="Ghori M.J."/>
            <person name="Gilby L.M."/>
            <person name="Gillson C.J."/>
            <person name="Glithero R.J."/>
            <person name="Grafham D.V."/>
            <person name="Grant M."/>
            <person name="Gribble S."/>
            <person name="Griffiths C."/>
            <person name="Griffiths M.N.D."/>
            <person name="Hall R."/>
            <person name="Halls K.S."/>
            <person name="Hammond S."/>
            <person name="Harley J.L."/>
            <person name="Hart E.A."/>
            <person name="Heath P.D."/>
            <person name="Heathcott R."/>
            <person name="Holmes S.J."/>
            <person name="Howden P.J."/>
            <person name="Howe K.L."/>
            <person name="Howell G.R."/>
            <person name="Huckle E."/>
            <person name="Humphray S.J."/>
            <person name="Humphries M.D."/>
            <person name="Hunt A.R."/>
            <person name="Johnson C.M."/>
            <person name="Joy A.A."/>
            <person name="Kay M."/>
            <person name="Keenan S.J."/>
            <person name="Kimberley A.M."/>
            <person name="King A."/>
            <person name="Laird G.K."/>
            <person name="Langford C."/>
            <person name="Lawlor S."/>
            <person name="Leongamornlert D.A."/>
            <person name="Leversha M."/>
            <person name="Lloyd C.R."/>
            <person name="Lloyd D.M."/>
            <person name="Loveland J.E."/>
            <person name="Lovell J."/>
            <person name="Martin S."/>
            <person name="Mashreghi-Mohammadi M."/>
            <person name="Maslen G.L."/>
            <person name="Matthews L."/>
            <person name="McCann O.T."/>
            <person name="McLaren S.J."/>
            <person name="McLay K."/>
            <person name="McMurray A."/>
            <person name="Moore M.J.F."/>
            <person name="Mullikin J.C."/>
            <person name="Niblett D."/>
            <person name="Nickerson T."/>
            <person name="Novik K.L."/>
            <person name="Oliver K."/>
            <person name="Overton-Larty E.K."/>
            <person name="Parker A."/>
            <person name="Patel R."/>
            <person name="Pearce A.V."/>
            <person name="Peck A.I."/>
            <person name="Phillimore B.J.C.T."/>
            <person name="Phillips S."/>
            <person name="Plumb R.W."/>
            <person name="Porter K.M."/>
            <person name="Ramsey Y."/>
            <person name="Ranby S.A."/>
            <person name="Rice C.M."/>
            <person name="Ross M.T."/>
            <person name="Searle S.M."/>
            <person name="Sehra H.K."/>
            <person name="Sheridan E."/>
            <person name="Skuce C.D."/>
            <person name="Smith S."/>
            <person name="Smith M."/>
            <person name="Spraggon L."/>
            <person name="Squares S.L."/>
            <person name="Steward C.A."/>
            <person name="Sycamore N."/>
            <person name="Tamlyn-Hall G."/>
            <person name="Tester J."/>
            <person name="Theaker A.J."/>
            <person name="Thomas D.W."/>
            <person name="Thorpe A."/>
            <person name="Tracey A."/>
            <person name="Tromans A."/>
            <person name="Tubby B."/>
            <person name="Wall M."/>
            <person name="Wallis J.M."/>
            <person name="West A.P."/>
            <person name="White S.S."/>
            <person name="Whitehead S.L."/>
            <person name="Whittaker H."/>
            <person name="Wild A."/>
            <person name="Willey D.J."/>
            <person name="Wilmer T.E."/>
            <person name="Wood J.M."/>
            <person name="Wray P.W."/>
            <person name="Wyatt J.C."/>
            <person name="Young L."/>
            <person name="Younger R.M."/>
            <person name="Bentley D.R."/>
            <person name="Coulson A."/>
            <person name="Durbin R.M."/>
            <person name="Hubbard T."/>
            <person name="Sulston J.E."/>
            <person name="Dunham I."/>
            <person name="Rogers J."/>
            <person name="Beck S."/>
        </authorList>
    </citation>
    <scope>NUCLEOTIDE SEQUENCE [LARGE SCALE GENOMIC DNA]</scope>
</reference>
<reference key="3">
    <citation type="journal article" date="2004" name="Genome Res.">
        <title>The status, quality, and expansion of the NIH full-length cDNA project: the Mammalian Gene Collection (MGC).</title>
        <authorList>
            <consortium name="The MGC Project Team"/>
        </authorList>
    </citation>
    <scope>NUCLEOTIDE SEQUENCE [LARGE SCALE MRNA] (ISOFORM 2)</scope>
    <source>
        <tissue>Testis</tissue>
    </source>
</reference>
<protein>
    <recommendedName>
        <fullName>Transmembrane protein 217</fullName>
    </recommendedName>
</protein>
<name>TM217_HUMAN</name>
<comment type="subcellular location">
    <subcellularLocation>
        <location evidence="3">Membrane</location>
        <topology evidence="3">Multi-pass membrane protein</topology>
    </subcellularLocation>
</comment>
<comment type="alternative products">
    <event type="alternative splicing"/>
    <isoform>
        <id>Q8N7C4-1</id>
        <name>1</name>
        <sequence type="displayed"/>
    </isoform>
    <isoform>
        <id>Q8N7C4-2</id>
        <name>2</name>
        <sequence type="described" ref="VSP_014386 VSP_014387"/>
    </isoform>
</comment>
<keyword id="KW-0025">Alternative splicing</keyword>
<keyword id="KW-0325">Glycoprotein</keyword>
<keyword id="KW-0472">Membrane</keyword>
<keyword id="KW-1267">Proteomics identification</keyword>
<keyword id="KW-1185">Reference proteome</keyword>
<keyword id="KW-0812">Transmembrane</keyword>
<keyword id="KW-1133">Transmembrane helix</keyword>
<gene>
    <name type="primary">TMEM217</name>
    <name type="synonym">C6orf128</name>
</gene>
<dbReference type="EMBL" id="AK098666">
    <property type="protein sequence ID" value="BAC05371.1"/>
    <property type="molecule type" value="mRNA"/>
</dbReference>
<dbReference type="EMBL" id="AL353579">
    <property type="status" value="NOT_ANNOTATED_CDS"/>
    <property type="molecule type" value="Genomic_DNA"/>
</dbReference>
<dbReference type="EMBL" id="BC026012">
    <property type="protein sequence ID" value="AAH26012.1"/>
    <property type="molecule type" value="mRNA"/>
</dbReference>
<dbReference type="CCDS" id="CCDS4831.1">
    <molecule id="Q8N7C4-1"/>
</dbReference>
<dbReference type="CCDS" id="CCDS69102.1">
    <molecule id="Q8N7C4-2"/>
</dbReference>
<dbReference type="RefSeq" id="NP_001273330.1">
    <molecule id="Q8N7C4-2"/>
    <property type="nucleotide sequence ID" value="NM_001286401.2"/>
</dbReference>
<dbReference type="RefSeq" id="NP_001358484.1">
    <molecule id="Q8N7C4-2"/>
    <property type="nucleotide sequence ID" value="NM_001371555.1"/>
</dbReference>
<dbReference type="RefSeq" id="NP_660359.2">
    <molecule id="Q8N7C4-1"/>
    <property type="nucleotide sequence ID" value="NM_145316.3"/>
</dbReference>
<dbReference type="RefSeq" id="XP_011512668.1">
    <property type="nucleotide sequence ID" value="XM_011514366.2"/>
</dbReference>
<dbReference type="FunCoup" id="Q8N7C4">
    <property type="interactions" value="40"/>
</dbReference>
<dbReference type="STRING" id="9606.ENSP00000338164"/>
<dbReference type="GlyCosmos" id="Q8N7C4">
    <property type="glycosylation" value="2 sites, No reported glycans"/>
</dbReference>
<dbReference type="GlyGen" id="Q8N7C4">
    <property type="glycosylation" value="3 sites, 1 N-linked glycan (1 site), 1 O-linked glycan (1 site)"/>
</dbReference>
<dbReference type="iPTMnet" id="Q8N7C4"/>
<dbReference type="BioMuta" id="TMEM217"/>
<dbReference type="DMDM" id="68565216"/>
<dbReference type="PaxDb" id="9606-ENSP00000338164"/>
<dbReference type="PeptideAtlas" id="Q8N7C4"/>
<dbReference type="Antibodypedia" id="67407">
    <property type="antibodies" value="39 antibodies from 9 providers"/>
</dbReference>
<dbReference type="DNASU" id="221468"/>
<dbReference type="Ensembl" id="ENST00000336655.7">
    <molecule id="Q8N7C4-1"/>
    <property type="protein sequence ID" value="ENSP00000338164.2"/>
    <property type="gene ID" value="ENSG00000172738.13"/>
</dbReference>
<dbReference type="Ensembl" id="ENST00000356757.7">
    <molecule id="Q8N7C4-2"/>
    <property type="protein sequence ID" value="ENSP00000349198.2"/>
    <property type="gene ID" value="ENSG00000172738.13"/>
</dbReference>
<dbReference type="Ensembl" id="ENST00000650973.1">
    <molecule id="Q8N7C4-1"/>
    <property type="protein sequence ID" value="ENSP00000498793.1"/>
    <property type="gene ID" value="ENSG00000172738.13"/>
</dbReference>
<dbReference type="Ensembl" id="ENST00000651039.2">
    <molecule id="Q8N7C4-2"/>
    <property type="protein sequence ID" value="ENSP00000499204.1"/>
    <property type="gene ID" value="ENSG00000172738.13"/>
</dbReference>
<dbReference type="GeneID" id="221468"/>
<dbReference type="KEGG" id="hsa:221468"/>
<dbReference type="MANE-Select" id="ENST00000651039.2">
    <molecule id="Q8N7C4-2"/>
    <property type="protein sequence ID" value="ENSP00000499204.1"/>
    <property type="RefSeq nucleotide sequence ID" value="NM_001286401.2"/>
    <property type="RefSeq protein sequence ID" value="NP_001273330.1"/>
</dbReference>
<dbReference type="UCSC" id="uc003onl.5">
    <molecule id="Q8N7C4-1"/>
    <property type="organism name" value="human"/>
</dbReference>
<dbReference type="AGR" id="HGNC:21238"/>
<dbReference type="CTD" id="221468"/>
<dbReference type="DisGeNET" id="221468"/>
<dbReference type="GeneCards" id="TMEM217"/>
<dbReference type="HGNC" id="HGNC:21238">
    <property type="gene designation" value="TMEM217"/>
</dbReference>
<dbReference type="HPA" id="ENSG00000172738">
    <property type="expression patterns" value="Tissue enhanced (testis)"/>
</dbReference>
<dbReference type="neXtProt" id="NX_Q8N7C4"/>
<dbReference type="OpenTargets" id="ENSG00000172738"/>
<dbReference type="PharmGKB" id="PA162406568"/>
<dbReference type="VEuPathDB" id="HostDB:ENSG00000172738"/>
<dbReference type="eggNOG" id="ENOG502S81N">
    <property type="taxonomic scope" value="Eukaryota"/>
</dbReference>
<dbReference type="GeneTree" id="ENSGT00730000111479"/>
<dbReference type="HOGENOM" id="CLU_105458_0_0_1"/>
<dbReference type="InParanoid" id="Q8N7C4"/>
<dbReference type="OMA" id="IWILFYE"/>
<dbReference type="OrthoDB" id="8878550at2759"/>
<dbReference type="PAN-GO" id="Q8N7C4">
    <property type="GO annotations" value="0 GO annotations based on evolutionary models"/>
</dbReference>
<dbReference type="PhylomeDB" id="Q8N7C4"/>
<dbReference type="TreeFam" id="TF338544"/>
<dbReference type="PathwayCommons" id="Q8N7C4"/>
<dbReference type="BioGRID-ORCS" id="221468">
    <property type="hits" value="9 hits in 1135 CRISPR screens"/>
</dbReference>
<dbReference type="ChiTaRS" id="TMEM217">
    <property type="organism name" value="human"/>
</dbReference>
<dbReference type="GenomeRNAi" id="221468"/>
<dbReference type="Pharos" id="Q8N7C4">
    <property type="development level" value="Tdark"/>
</dbReference>
<dbReference type="PRO" id="PR:Q8N7C4"/>
<dbReference type="Proteomes" id="UP000005640">
    <property type="component" value="Chromosome 6"/>
</dbReference>
<dbReference type="RNAct" id="Q8N7C4">
    <property type="molecule type" value="protein"/>
</dbReference>
<dbReference type="Bgee" id="ENSG00000172738">
    <property type="expression patterns" value="Expressed in male germ line stem cell (sensu Vertebrata) in testis and 100 other cell types or tissues"/>
</dbReference>
<dbReference type="ExpressionAtlas" id="Q8N7C4">
    <property type="expression patterns" value="baseline and differential"/>
</dbReference>
<dbReference type="GO" id="GO:0016020">
    <property type="term" value="C:membrane"/>
    <property type="evidence" value="ECO:0007669"/>
    <property type="project" value="UniProtKB-SubCell"/>
</dbReference>
<dbReference type="InterPro" id="IPR027862">
    <property type="entry name" value="DUF4534"/>
</dbReference>
<dbReference type="PANTHER" id="PTHR34928">
    <property type="entry name" value="TRANSMEMBRANE PROTEIN 217"/>
    <property type="match status" value="1"/>
</dbReference>
<dbReference type="PANTHER" id="PTHR34928:SF2">
    <property type="entry name" value="TRANSMEMBRANE PROTEIN 217"/>
    <property type="match status" value="1"/>
</dbReference>
<dbReference type="Pfam" id="PF15049">
    <property type="entry name" value="DUF4534"/>
    <property type="match status" value="1"/>
</dbReference>
<sequence length="229" mass="26582">MKQQQWCGMTAKMGTVLSGVFTIMAVDMYLIFEQKHLGNGSCTEITPKYRGASNIINNFIICWSFKIVLFLSFITILISCFLLYSVYAQIFRGLVIYIVWIFFYETANVVIQILTNNDFDIKEVRIMRWFGLVSRTVMHCFWMFFVINYAHITYKNRSQGNIISYKRRISTAEILHSRNKRLSISSGFSGSHLESQYFERQSFHTSIFTCLSPVPSSAPSTCRYTIDVC</sequence>
<feature type="chain" id="PRO_0000089528" description="Transmembrane protein 217">
    <location>
        <begin position="1"/>
        <end position="229"/>
    </location>
</feature>
<feature type="transmembrane region" description="Helical" evidence="1">
    <location>
        <begin position="13"/>
        <end position="33"/>
    </location>
</feature>
<feature type="transmembrane region" description="Helical" evidence="1">
    <location>
        <begin position="67"/>
        <end position="87"/>
    </location>
</feature>
<feature type="transmembrane region" description="Helical" evidence="1">
    <location>
        <begin position="94"/>
        <end position="114"/>
    </location>
</feature>
<feature type="transmembrane region" description="Helical" evidence="1">
    <location>
        <begin position="129"/>
        <end position="149"/>
    </location>
</feature>
<feature type="glycosylation site" description="N-linked (GlcNAc...) asparagine" evidence="1">
    <location>
        <position position="39"/>
    </location>
</feature>
<feature type="glycosylation site" description="N-linked (GlcNAc...) asparagine" evidence="1">
    <location>
        <position position="156"/>
    </location>
</feature>
<feature type="splice variant" id="VSP_014386" description="In isoform 2." evidence="2">
    <original>SFHTSIFTCL</original>
    <variation>RRCSGKTSIK</variation>
    <location>
        <begin position="202"/>
        <end position="211"/>
    </location>
</feature>
<feature type="splice variant" id="VSP_014387" description="In isoform 2." evidence="2">
    <location>
        <begin position="212"/>
        <end position="229"/>
    </location>
</feature>
<accession>Q8N7C4</accession>
<accession>Q8TC54</accession>
<evidence type="ECO:0000255" key="1"/>
<evidence type="ECO:0000303" key="2">
    <source>
    </source>
</evidence>
<evidence type="ECO:0000305" key="3"/>
<organism>
    <name type="scientific">Homo sapiens</name>
    <name type="common">Human</name>
    <dbReference type="NCBI Taxonomy" id="9606"/>
    <lineage>
        <taxon>Eukaryota</taxon>
        <taxon>Metazoa</taxon>
        <taxon>Chordata</taxon>
        <taxon>Craniata</taxon>
        <taxon>Vertebrata</taxon>
        <taxon>Euteleostomi</taxon>
        <taxon>Mammalia</taxon>
        <taxon>Eutheria</taxon>
        <taxon>Euarchontoglires</taxon>
        <taxon>Primates</taxon>
        <taxon>Haplorrhini</taxon>
        <taxon>Catarrhini</taxon>
        <taxon>Hominidae</taxon>
        <taxon>Homo</taxon>
    </lineage>
</organism>